<accession>P0CH59</accession>
<proteinExistence type="evidence at protein level"/>
<keyword id="KW-0903">Direct protein sequencing</keyword>
<keyword id="KW-1015">Disulfide bond</keyword>
<keyword id="KW-0872">Ion channel impairing toxin</keyword>
<keyword id="KW-0960">Knottin</keyword>
<keyword id="KW-0964">Secreted</keyword>
<keyword id="KW-0800">Toxin</keyword>
<reference key="1">
    <citation type="journal article" date="2010" name="J. Proteome Res.">
        <title>Molecular diversification of peptide toxins from the tarantula Haplopelma hainanum (Ornithoctonus hainana) venom based on transcriptomic, peptidomic, and genomic analyses.</title>
        <authorList>
            <person name="Tang X."/>
            <person name="Zhang Y."/>
            <person name="Hu W."/>
            <person name="Xu D."/>
            <person name="Tao H."/>
            <person name="Yang X."/>
            <person name="Li Y."/>
            <person name="Jiang L."/>
            <person name="Liang S."/>
        </authorList>
    </citation>
    <scope>PROTEIN SEQUENCE</scope>
    <scope>IDENTIFICATION BY MASS SPECTROMETRY</scope>
    <source>
        <tissue>Venom</tissue>
    </source>
</reference>
<sequence length="26" mass="3051">ECKWYLGTCSKDGDCCKHLQCHSNYE</sequence>
<protein>
    <recommendedName>
        <fullName>Hainantoxin F1-31.97</fullName>
    </recommendedName>
    <alternativeName>
        <fullName>Peptide F1-31.97</fullName>
    </alternativeName>
</protein>
<comment type="function">
    <text evidence="1">Ion channel inhibitor.</text>
</comment>
<comment type="subcellular location">
    <subcellularLocation>
        <location>Secreted</location>
    </subcellularLocation>
</comment>
<comment type="tissue specificity">
    <text>Expressed by the venom gland.</text>
</comment>
<comment type="domain">
    <text evidence="1">The presence of a 'disulfide through disulfide knot' structurally defines this protein as a knottin.</text>
</comment>
<comment type="similarity">
    <text evidence="2">Belongs to the neurotoxin 10 (Hwtx-1) family. 17 (Hntx-9) subfamily.</text>
</comment>
<organism>
    <name type="scientific">Cyriopagopus hainanus</name>
    <name type="common">Chinese bird spider</name>
    <name type="synonym">Haplopelma hainanum</name>
    <dbReference type="NCBI Taxonomy" id="209901"/>
    <lineage>
        <taxon>Eukaryota</taxon>
        <taxon>Metazoa</taxon>
        <taxon>Ecdysozoa</taxon>
        <taxon>Arthropoda</taxon>
        <taxon>Chelicerata</taxon>
        <taxon>Arachnida</taxon>
        <taxon>Araneae</taxon>
        <taxon>Mygalomorphae</taxon>
        <taxon>Theraphosidae</taxon>
        <taxon>Haplopelma</taxon>
    </lineage>
</organism>
<feature type="peptide" id="PRO_0000400717" description="Hainantoxin F1-31.97">
    <location>
        <begin position="1"/>
        <end position="26" status="greater than"/>
    </location>
</feature>
<feature type="disulfide bond" evidence="1">
    <location>
        <begin position="2"/>
        <end position="16"/>
    </location>
</feature>
<feature type="disulfide bond" evidence="1">
    <location>
        <begin position="9"/>
        <end position="21"/>
    </location>
</feature>
<feature type="non-terminal residue">
    <location>
        <position position="26"/>
    </location>
</feature>
<dbReference type="SMR" id="P0CH59"/>
<dbReference type="GO" id="GO:0005576">
    <property type="term" value="C:extracellular region"/>
    <property type="evidence" value="ECO:0007669"/>
    <property type="project" value="UniProtKB-SubCell"/>
</dbReference>
<dbReference type="GO" id="GO:0008200">
    <property type="term" value="F:ion channel inhibitor activity"/>
    <property type="evidence" value="ECO:0007669"/>
    <property type="project" value="InterPro"/>
</dbReference>
<dbReference type="GO" id="GO:0090729">
    <property type="term" value="F:toxin activity"/>
    <property type="evidence" value="ECO:0007669"/>
    <property type="project" value="UniProtKB-KW"/>
</dbReference>
<dbReference type="InterPro" id="IPR011696">
    <property type="entry name" value="Huwentoxin-1"/>
</dbReference>
<dbReference type="Pfam" id="PF07740">
    <property type="entry name" value="Toxin_12"/>
    <property type="match status" value="1"/>
</dbReference>
<dbReference type="SUPFAM" id="SSF57059">
    <property type="entry name" value="omega toxin-like"/>
    <property type="match status" value="1"/>
</dbReference>
<name>HN131_CYRHA</name>
<evidence type="ECO:0000250" key="1"/>
<evidence type="ECO:0000305" key="2"/>